<keyword id="KW-0145">Chemotaxis</keyword>
<keyword id="KW-0963">Cytoplasm</keyword>
<keyword id="KW-0378">Hydrolase</keyword>
<keyword id="KW-0597">Phosphoprotein</keyword>
<sequence length="349" mass="37453">MSKIRVLSVDDSALMRQIMTEIINSHSDMEMVATAPDPLVARDLIKKFNPDVLTLDVEMPRMDGLDFLEKLMRLRPMPVVMVSSLTGKGSEVTLRALELGAIDFVTKPQLGIREGMLAYSEMIAEKVRTAAKASLAAHKPLSVPTTLKAGPLLSSEKLIAIGASTGGTEAIRHVLQPLPLSSPALLITQHMPPGFTRSFADRLNKLCQIGVKEAEDGERVLPGHAYIAPGDRHMELARSGANYQIKIHDGPAVNRHRPSVDVLFHSVAKQAGRNAVGVILTGMGNDGAAGMLAMRQAGAWTLAQNEASCVVFGMPREAINMGGVCEVVDLSQVSQQMLAKISAGQAIRI</sequence>
<dbReference type="EC" id="3.1.1.61" evidence="1"/>
<dbReference type="EC" id="3.5.1.44" evidence="1"/>
<dbReference type="EMBL" id="CP000247">
    <property type="protein sequence ID" value="ABG69829.1"/>
    <property type="molecule type" value="Genomic_DNA"/>
</dbReference>
<dbReference type="RefSeq" id="WP_000036385.1">
    <property type="nucleotide sequence ID" value="NC_008253.1"/>
</dbReference>
<dbReference type="SMR" id="Q0TGV0"/>
<dbReference type="KEGG" id="ecp:ECP_1828"/>
<dbReference type="HOGENOM" id="CLU_000445_51_0_6"/>
<dbReference type="Proteomes" id="UP000009182">
    <property type="component" value="Chromosome"/>
</dbReference>
<dbReference type="GO" id="GO:0005737">
    <property type="term" value="C:cytoplasm"/>
    <property type="evidence" value="ECO:0007669"/>
    <property type="project" value="UniProtKB-SubCell"/>
</dbReference>
<dbReference type="GO" id="GO:0000156">
    <property type="term" value="F:phosphorelay response regulator activity"/>
    <property type="evidence" value="ECO:0007669"/>
    <property type="project" value="InterPro"/>
</dbReference>
<dbReference type="GO" id="GO:0008984">
    <property type="term" value="F:protein-glutamate methylesterase activity"/>
    <property type="evidence" value="ECO:0007669"/>
    <property type="project" value="UniProtKB-UniRule"/>
</dbReference>
<dbReference type="GO" id="GO:0050568">
    <property type="term" value="F:protein-glutamine glutaminase activity"/>
    <property type="evidence" value="ECO:0007669"/>
    <property type="project" value="UniProtKB-UniRule"/>
</dbReference>
<dbReference type="GO" id="GO:0006935">
    <property type="term" value="P:chemotaxis"/>
    <property type="evidence" value="ECO:0007669"/>
    <property type="project" value="UniProtKB-UniRule"/>
</dbReference>
<dbReference type="CDD" id="cd16432">
    <property type="entry name" value="CheB_Rec"/>
    <property type="match status" value="1"/>
</dbReference>
<dbReference type="CDD" id="cd17541">
    <property type="entry name" value="REC_CheB-like"/>
    <property type="match status" value="1"/>
</dbReference>
<dbReference type="FunFam" id="3.40.50.180:FF:000001">
    <property type="entry name" value="Protein-glutamate methylesterase/protein-glutamine glutaminase"/>
    <property type="match status" value="1"/>
</dbReference>
<dbReference type="FunFam" id="3.40.50.2300:FF:000060">
    <property type="entry name" value="Protein-glutamate methylesterase/protein-glutamine glutaminase"/>
    <property type="match status" value="1"/>
</dbReference>
<dbReference type="Gene3D" id="3.40.50.2300">
    <property type="match status" value="1"/>
</dbReference>
<dbReference type="Gene3D" id="3.40.50.180">
    <property type="entry name" value="Methylesterase CheB, C-terminal domain"/>
    <property type="match status" value="1"/>
</dbReference>
<dbReference type="HAMAP" id="MF_00099">
    <property type="entry name" value="CheB_chemtxs"/>
    <property type="match status" value="1"/>
</dbReference>
<dbReference type="InterPro" id="IPR008248">
    <property type="entry name" value="CheB-like"/>
</dbReference>
<dbReference type="InterPro" id="IPR035909">
    <property type="entry name" value="CheB_C"/>
</dbReference>
<dbReference type="InterPro" id="IPR011006">
    <property type="entry name" value="CheY-like_superfamily"/>
</dbReference>
<dbReference type="InterPro" id="IPR000673">
    <property type="entry name" value="Sig_transdc_resp-reg_Me-estase"/>
</dbReference>
<dbReference type="InterPro" id="IPR001789">
    <property type="entry name" value="Sig_transdc_resp-reg_receiver"/>
</dbReference>
<dbReference type="NCBIfam" id="NF001965">
    <property type="entry name" value="PRK00742.1"/>
    <property type="match status" value="1"/>
</dbReference>
<dbReference type="NCBIfam" id="NF009206">
    <property type="entry name" value="PRK12555.1"/>
    <property type="match status" value="1"/>
</dbReference>
<dbReference type="PANTHER" id="PTHR42872">
    <property type="entry name" value="PROTEIN-GLUTAMATE METHYLESTERASE/PROTEIN-GLUTAMINE GLUTAMINASE"/>
    <property type="match status" value="1"/>
</dbReference>
<dbReference type="PANTHER" id="PTHR42872:SF6">
    <property type="entry name" value="PROTEIN-GLUTAMATE METHYLESTERASE_PROTEIN-GLUTAMINE GLUTAMINASE"/>
    <property type="match status" value="1"/>
</dbReference>
<dbReference type="Pfam" id="PF01339">
    <property type="entry name" value="CheB_methylest"/>
    <property type="match status" value="1"/>
</dbReference>
<dbReference type="Pfam" id="PF00072">
    <property type="entry name" value="Response_reg"/>
    <property type="match status" value="1"/>
</dbReference>
<dbReference type="PIRSF" id="PIRSF000876">
    <property type="entry name" value="RR_chemtxs_CheB"/>
    <property type="match status" value="1"/>
</dbReference>
<dbReference type="SMART" id="SM00448">
    <property type="entry name" value="REC"/>
    <property type="match status" value="1"/>
</dbReference>
<dbReference type="SUPFAM" id="SSF52172">
    <property type="entry name" value="CheY-like"/>
    <property type="match status" value="1"/>
</dbReference>
<dbReference type="SUPFAM" id="SSF52738">
    <property type="entry name" value="Methylesterase CheB, C-terminal domain"/>
    <property type="match status" value="1"/>
</dbReference>
<dbReference type="PROSITE" id="PS50122">
    <property type="entry name" value="CHEB"/>
    <property type="match status" value="1"/>
</dbReference>
<dbReference type="PROSITE" id="PS50110">
    <property type="entry name" value="RESPONSE_REGULATORY"/>
    <property type="match status" value="1"/>
</dbReference>
<comment type="function">
    <text evidence="1">Involved in chemotaxis. Part of a chemotaxis signal transduction system that modulates chemotaxis in response to various stimuli. Catalyzes the demethylation of specific methylglutamate residues introduced into the chemoreceptors (methyl-accepting chemotaxis proteins or MCP) by CheR. Also mediates the irreversible deamidation of specific glutamine residues to glutamic acid.</text>
</comment>
<comment type="catalytic activity">
    <reaction evidence="1">
        <text>[protein]-L-glutamate 5-O-methyl ester + H2O = L-glutamyl-[protein] + methanol + H(+)</text>
        <dbReference type="Rhea" id="RHEA:23236"/>
        <dbReference type="Rhea" id="RHEA-COMP:10208"/>
        <dbReference type="Rhea" id="RHEA-COMP:10311"/>
        <dbReference type="ChEBI" id="CHEBI:15377"/>
        <dbReference type="ChEBI" id="CHEBI:15378"/>
        <dbReference type="ChEBI" id="CHEBI:17790"/>
        <dbReference type="ChEBI" id="CHEBI:29973"/>
        <dbReference type="ChEBI" id="CHEBI:82795"/>
        <dbReference type="EC" id="3.1.1.61"/>
    </reaction>
</comment>
<comment type="catalytic activity">
    <reaction evidence="1">
        <text>L-glutaminyl-[protein] + H2O = L-glutamyl-[protein] + NH4(+)</text>
        <dbReference type="Rhea" id="RHEA:16441"/>
        <dbReference type="Rhea" id="RHEA-COMP:10207"/>
        <dbReference type="Rhea" id="RHEA-COMP:10208"/>
        <dbReference type="ChEBI" id="CHEBI:15377"/>
        <dbReference type="ChEBI" id="CHEBI:28938"/>
        <dbReference type="ChEBI" id="CHEBI:29973"/>
        <dbReference type="ChEBI" id="CHEBI:30011"/>
        <dbReference type="EC" id="3.5.1.44"/>
    </reaction>
</comment>
<comment type="subcellular location">
    <subcellularLocation>
        <location evidence="1">Cytoplasm</location>
    </subcellularLocation>
</comment>
<comment type="domain">
    <text evidence="1">Contains a C-terminal catalytic domain, and an N-terminal region which modulates catalytic activity.</text>
</comment>
<comment type="PTM">
    <text evidence="1">Phosphorylated by CheA. Phosphorylation of the N-terminal regulatory domain activates the methylesterase activity.</text>
</comment>
<comment type="similarity">
    <text evidence="1">Belongs to the CheB family.</text>
</comment>
<protein>
    <recommendedName>
        <fullName evidence="1">Protein-glutamate methylesterase/protein-glutamine glutaminase</fullName>
        <ecNumber evidence="1">3.1.1.61</ecNumber>
        <ecNumber evidence="1">3.5.1.44</ecNumber>
    </recommendedName>
</protein>
<feature type="chain" id="PRO_0000264275" description="Protein-glutamate methylesterase/protein-glutamine glutaminase">
    <location>
        <begin position="1"/>
        <end position="349"/>
    </location>
</feature>
<feature type="domain" description="Response regulatory" evidence="1">
    <location>
        <begin position="5"/>
        <end position="122"/>
    </location>
</feature>
<feature type="domain" description="CheB-type methylesterase" evidence="1">
    <location>
        <begin position="152"/>
        <end position="344"/>
    </location>
</feature>
<feature type="active site" evidence="1">
    <location>
        <position position="164"/>
    </location>
</feature>
<feature type="active site" evidence="1">
    <location>
        <position position="190"/>
    </location>
</feature>
<feature type="active site" evidence="1">
    <location>
        <position position="286"/>
    </location>
</feature>
<feature type="modified residue" description="4-aspartylphosphate" evidence="1">
    <location>
        <position position="56"/>
    </location>
</feature>
<gene>
    <name evidence="1" type="primary">cheB</name>
    <name type="ordered locus">ECP_1828</name>
</gene>
<reference key="1">
    <citation type="journal article" date="2006" name="Mol. Microbiol.">
        <title>Role of pathogenicity island-associated integrases in the genome plasticity of uropathogenic Escherichia coli strain 536.</title>
        <authorList>
            <person name="Hochhut B."/>
            <person name="Wilde C."/>
            <person name="Balling G."/>
            <person name="Middendorf B."/>
            <person name="Dobrindt U."/>
            <person name="Brzuszkiewicz E."/>
            <person name="Gottschalk G."/>
            <person name="Carniel E."/>
            <person name="Hacker J."/>
        </authorList>
    </citation>
    <scope>NUCLEOTIDE SEQUENCE [LARGE SCALE GENOMIC DNA]</scope>
    <source>
        <strain>536 / UPEC</strain>
    </source>
</reference>
<evidence type="ECO:0000255" key="1">
    <source>
        <dbReference type="HAMAP-Rule" id="MF_00099"/>
    </source>
</evidence>
<accession>Q0TGV0</accession>
<organism>
    <name type="scientific">Escherichia coli O6:K15:H31 (strain 536 / UPEC)</name>
    <dbReference type="NCBI Taxonomy" id="362663"/>
    <lineage>
        <taxon>Bacteria</taxon>
        <taxon>Pseudomonadati</taxon>
        <taxon>Pseudomonadota</taxon>
        <taxon>Gammaproteobacteria</taxon>
        <taxon>Enterobacterales</taxon>
        <taxon>Enterobacteriaceae</taxon>
        <taxon>Escherichia</taxon>
    </lineage>
</organism>
<name>CHEB_ECOL5</name>
<proteinExistence type="inferred from homology"/>